<proteinExistence type="evidence at protein level"/>
<accession>Q8QHJ9</accession>
<accession>Q4VBV6</accession>
<accession>Q8QHJ6</accession>
<feature type="signal peptide" evidence="1">
    <location>
        <begin position="1"/>
        <end position="26"/>
    </location>
</feature>
<feature type="chain" id="PRO_0000041874" description="Interleukin-17 receptor D">
    <location>
        <begin position="27"/>
        <end position="745"/>
    </location>
</feature>
<feature type="topological domain" description="Extracellular" evidence="1">
    <location>
        <begin position="27"/>
        <end position="298"/>
    </location>
</feature>
<feature type="transmembrane region" description="Helical" evidence="1">
    <location>
        <begin position="299"/>
        <end position="319"/>
    </location>
</feature>
<feature type="topological domain" description="Cytoplasmic" evidence="1">
    <location>
        <begin position="320"/>
        <end position="745"/>
    </location>
</feature>
<feature type="domain" description="SEFIR" evidence="2">
    <location>
        <begin position="354"/>
        <end position="518"/>
    </location>
</feature>
<feature type="region of interest" description="Disordered" evidence="3">
    <location>
        <begin position="432"/>
        <end position="454"/>
    </location>
</feature>
<feature type="region of interest" description="Disordered" evidence="3">
    <location>
        <begin position="631"/>
        <end position="713"/>
    </location>
</feature>
<feature type="compositionally biased region" description="Basic and acidic residues" evidence="3">
    <location>
        <begin position="439"/>
        <end position="448"/>
    </location>
</feature>
<feature type="compositionally biased region" description="Low complexity" evidence="3">
    <location>
        <begin position="693"/>
        <end position="705"/>
    </location>
</feature>
<feature type="glycosylation site" description="N-linked (GlcNAc...) asparagine" evidence="1">
    <location>
        <position position="61"/>
    </location>
</feature>
<feature type="glycosylation site" description="N-linked (GlcNAc...) asparagine" evidence="1">
    <location>
        <position position="79"/>
    </location>
</feature>
<feature type="glycosylation site" description="N-linked (GlcNAc...) asparagine" evidence="1">
    <location>
        <position position="136"/>
    </location>
</feature>
<feature type="glycosylation site" description="N-linked (GlcNAc...) asparagine" evidence="1">
    <location>
        <position position="170"/>
    </location>
</feature>
<feature type="glycosylation site" description="N-linked (GlcNAc...) asparagine" evidence="1">
    <location>
        <position position="205"/>
    </location>
</feature>
<feature type="glycosylation site" description="N-linked (GlcNAc...) asparagine" evidence="1">
    <location>
        <position position="276"/>
    </location>
</feature>
<feature type="sequence conflict" description="In Ref. 1; AAL76112." evidence="6" ref="1">
    <original>S</original>
    <variation>N</variation>
    <location>
        <position position="67"/>
    </location>
</feature>
<feature type="sequence conflict" description="In Ref. 1; AAL76112." evidence="6" ref="1">
    <original>S</original>
    <variation>T</variation>
    <location>
        <position position="81"/>
    </location>
</feature>
<feature type="sequence conflict" description="In Ref. 2; AAL78817." evidence="6" ref="2">
    <original>T</original>
    <variation>N</variation>
    <location>
        <position position="167"/>
    </location>
</feature>
<feature type="sequence conflict" description="In Ref. 2; AAL78817." evidence="6" ref="2">
    <original>L</original>
    <variation>F</variation>
    <location>
        <position position="739"/>
    </location>
</feature>
<keyword id="KW-0325">Glycoprotein</keyword>
<keyword id="KW-0472">Membrane</keyword>
<keyword id="KW-0675">Receptor</keyword>
<keyword id="KW-1185">Reference proteome</keyword>
<keyword id="KW-0732">Signal</keyword>
<keyword id="KW-0812">Transmembrane</keyword>
<keyword id="KW-1133">Transmembrane helix</keyword>
<name>I17RD_DANRE</name>
<dbReference type="EMBL" id="AF364103">
    <property type="protein sequence ID" value="AAL76112.1"/>
    <property type="molecule type" value="mRNA"/>
</dbReference>
<dbReference type="EMBL" id="AF401232">
    <property type="protein sequence ID" value="AAL78817.1"/>
    <property type="molecule type" value="mRNA"/>
</dbReference>
<dbReference type="EMBL" id="BC094998">
    <property type="protein sequence ID" value="AAH94998.1"/>
    <property type="status" value="ALT_SEQ"/>
    <property type="molecule type" value="mRNA"/>
</dbReference>
<dbReference type="SMR" id="Q8QHJ9"/>
<dbReference type="FunCoup" id="Q8QHJ9">
    <property type="interactions" value="2712"/>
</dbReference>
<dbReference type="STRING" id="7955.ENSDARP00000140479"/>
<dbReference type="GlyCosmos" id="Q8QHJ9">
    <property type="glycosylation" value="6 sites, No reported glycans"/>
</dbReference>
<dbReference type="PaxDb" id="7955-ENSDARP00000107809"/>
<dbReference type="AGR" id="ZFIN:ZDB-GENE-020320-5"/>
<dbReference type="ZFIN" id="ZDB-GENE-020320-5">
    <property type="gene designation" value="il17rd"/>
</dbReference>
<dbReference type="eggNOG" id="ENOG502QV61">
    <property type="taxonomic scope" value="Eukaryota"/>
</dbReference>
<dbReference type="InParanoid" id="Q8QHJ9"/>
<dbReference type="PhylomeDB" id="Q8QHJ9"/>
<dbReference type="Reactome" id="R-DRE-5674135">
    <property type="pathway name" value="MAP2K and MAPK activation"/>
</dbReference>
<dbReference type="PRO" id="PR:Q8QHJ9"/>
<dbReference type="Proteomes" id="UP000000437">
    <property type="component" value="Unplaced"/>
</dbReference>
<dbReference type="GO" id="GO:0016020">
    <property type="term" value="C:membrane"/>
    <property type="evidence" value="ECO:0000250"/>
    <property type="project" value="ZFIN"/>
</dbReference>
<dbReference type="GO" id="GO:0030368">
    <property type="term" value="F:interleukin-17 receptor activity"/>
    <property type="evidence" value="ECO:0000318"/>
    <property type="project" value="GO_Central"/>
</dbReference>
<dbReference type="GO" id="GO:0009953">
    <property type="term" value="P:dorsal/ventral pattern formation"/>
    <property type="evidence" value="ECO:0000315"/>
    <property type="project" value="ZFIN"/>
</dbReference>
<dbReference type="GO" id="GO:0040037">
    <property type="term" value="P:negative regulation of fibroblast growth factor receptor signaling pathway"/>
    <property type="evidence" value="ECO:0000315"/>
    <property type="project" value="ZFIN"/>
</dbReference>
<dbReference type="GO" id="GO:0043409">
    <property type="term" value="P:negative regulation of MAPK cascade"/>
    <property type="evidence" value="ECO:0000315"/>
    <property type="project" value="ZFIN"/>
</dbReference>
<dbReference type="FunFam" id="3.40.50.11530:FF:000003">
    <property type="entry name" value="Interleukin-17 receptor D"/>
    <property type="match status" value="1"/>
</dbReference>
<dbReference type="Gene3D" id="3.40.50.11530">
    <property type="match status" value="1"/>
</dbReference>
<dbReference type="InterPro" id="IPR039465">
    <property type="entry name" value="IL-17_rcpt-like"/>
</dbReference>
<dbReference type="InterPro" id="IPR031951">
    <property type="entry name" value="IL17R_D_N"/>
</dbReference>
<dbReference type="InterPro" id="IPR013568">
    <property type="entry name" value="SEFIR_dom"/>
</dbReference>
<dbReference type="PANTHER" id="PTHR15583">
    <property type="entry name" value="INTERLEUKIN-17 RECEPTOR"/>
    <property type="match status" value="1"/>
</dbReference>
<dbReference type="PANTHER" id="PTHR15583:SF14">
    <property type="entry name" value="INTERLEUKIN-17 RECEPTOR D"/>
    <property type="match status" value="1"/>
</dbReference>
<dbReference type="Pfam" id="PF16742">
    <property type="entry name" value="IL17R_D_N"/>
    <property type="match status" value="1"/>
</dbReference>
<dbReference type="Pfam" id="PF08357">
    <property type="entry name" value="SEFIR"/>
    <property type="match status" value="1"/>
</dbReference>
<dbReference type="PROSITE" id="PS51534">
    <property type="entry name" value="SEFIR"/>
    <property type="match status" value="1"/>
</dbReference>
<organism>
    <name type="scientific">Danio rerio</name>
    <name type="common">Zebrafish</name>
    <name type="synonym">Brachydanio rerio</name>
    <dbReference type="NCBI Taxonomy" id="7955"/>
    <lineage>
        <taxon>Eukaryota</taxon>
        <taxon>Metazoa</taxon>
        <taxon>Chordata</taxon>
        <taxon>Craniata</taxon>
        <taxon>Vertebrata</taxon>
        <taxon>Euteleostomi</taxon>
        <taxon>Actinopterygii</taxon>
        <taxon>Neopterygii</taxon>
        <taxon>Teleostei</taxon>
        <taxon>Ostariophysi</taxon>
        <taxon>Cypriniformes</taxon>
        <taxon>Danionidae</taxon>
        <taxon>Danioninae</taxon>
        <taxon>Danio</taxon>
    </lineage>
</organism>
<reference key="1">
    <citation type="journal article" date="2002" name="Nat. Cell Biol.">
        <title>Identification of Sef, a novel modulator of FGF signalling.</title>
        <authorList>
            <person name="Tsang M."/>
            <person name="Friesel R."/>
            <person name="Kudoh T."/>
            <person name="Dawid I."/>
        </authorList>
    </citation>
    <scope>NUCLEOTIDE SEQUENCE [MRNA]</scope>
    <scope>FUNCTION</scope>
    <scope>INTERACTION WITH FGFR1 AND FGFR2</scope>
</reference>
<reference key="2">
    <citation type="journal article" date="2002" name="Nat. Cell Biol.">
        <title>Sef is a feedback-induced antagonist of Ras/MAPK-mediated FGF signalling.</title>
        <authorList>
            <person name="Fuerthauer M."/>
            <person name="Lin W."/>
            <person name="Ang S.-L."/>
            <person name="Thisse B."/>
            <person name="Thisse C."/>
        </authorList>
    </citation>
    <scope>NUCLEOTIDE SEQUENCE [MRNA]</scope>
    <scope>FUNCTION</scope>
</reference>
<reference key="3">
    <citation type="submission" date="2005-05" db="EMBL/GenBank/DDBJ databases">
        <authorList>
            <consortium name="NIH - Zebrafish Gene Collection (ZGC) project"/>
        </authorList>
    </citation>
    <scope>NUCLEOTIDE SEQUENCE [LARGE SCALE MRNA] OF 1-441</scope>
    <source>
        <tissue>Larva</tissue>
    </source>
</reference>
<gene>
    <name type="primary">il17rd</name>
    <name type="synonym">cb208</name>
    <name type="synonym">sef</name>
</gene>
<comment type="function">
    <text evidence="4 5">Feedback inhibitor of fibroblast growth factor mediated Ras-MAPK signaling and ERK activation. May inhibit FGF-induced FGFR1 tyrosine phosphorylation.</text>
</comment>
<comment type="subunit">
    <text evidence="4">Interacts with fgfr1 and fgfr2.</text>
</comment>
<comment type="subcellular location">
    <subcellularLocation>
        <location>Membrane</location>
        <topology>Single-pass type I membrane protein</topology>
    </subcellularLocation>
</comment>
<comment type="sequence caution" evidence="6">
    <conflict type="miscellaneous discrepancy">
        <sequence resource="EMBL-CDS" id="AAH94998"/>
    </conflict>
    <text>Contaminating sequence. Potential poly-A sequence.</text>
</comment>
<sequence>MAGSRRLAHFFMASCLFLCYTASVNGGKRGNSDKCSYKQGTQTSSMDEGARKLGVTFRYDNCSVNWSPLGKHAIHEVNNISFSHLSCDSQAAVVVHWMASPLGIEHVKGFRVYLEDKNPERKQCQHLILKDPRQLNFSYKTIRMSSQPFSSLAFETDYMVRIVPFPTFLNDSFFPPSFLRTNSCEVLLGPDNLVCKPFWKPKMLNVSQLGSNLHVVFDHAPSTFGFSIYYLYYKLRQEGPFRLKRCKPEQNGPKTTCVLQDVTPGTYAIELRDDSNNTRRQTQYHVSQVHSPWAGPIRAMAITVPLVIMSAFATLFTVMCRKKQQENIYSHLDEESSESSSQTTALSADRPWPRPKIFICYSSRDGAKHLAVIQSFAFFLQDFCGCEVSLDLWEHLEICKEGQMSWLSRRIDEAHFIITVCSKGLKHFVEKRHRKGKATSKEKNREPSASDSSSSSRDLFIVASAIISEKLKEVHQKSSDLSRFMSVYFDYSHETDVPTSLSLAPKFKLMDQLPQLFARLHSRQLSLTDREPQPPNVSKRNYFCSKSGRSLYVAIYNMHQHVTQEPDWLEKELMPPPLPNKRTIPEKVDSGLVLNEVKLKHGSESECPPVRSNVLILPQTPQVGVSLSLSREDLGEGSSSQDAGSCRPVLHTDGSASPPEMPRDSGIYDSSVPSSELSIPLMDGLSPDHADNSSLADSVSSSSGLGDEEPPAVSSLHCTAHTICKADLHHQHLHPSEGLIAAAST</sequence>
<protein>
    <recommendedName>
        <fullName>Interleukin-17 receptor D</fullName>
        <shortName>IL-17 receptor D</shortName>
        <shortName>IL-17RD</shortName>
    </recommendedName>
    <alternativeName>
        <fullName>Similar expression to FGF genes protein</fullName>
        <shortName>Sef</shortName>
    </alternativeName>
</protein>
<evidence type="ECO:0000255" key="1"/>
<evidence type="ECO:0000255" key="2">
    <source>
        <dbReference type="PROSITE-ProRule" id="PRU00867"/>
    </source>
</evidence>
<evidence type="ECO:0000256" key="3">
    <source>
        <dbReference type="SAM" id="MobiDB-lite"/>
    </source>
</evidence>
<evidence type="ECO:0000269" key="4">
    <source>
    </source>
</evidence>
<evidence type="ECO:0000269" key="5">
    <source>
    </source>
</evidence>
<evidence type="ECO:0000305" key="6"/>